<dbReference type="EMBL" id="AE014074">
    <property type="protein sequence ID" value="AAM78665.1"/>
    <property type="molecule type" value="Genomic_DNA"/>
</dbReference>
<dbReference type="RefSeq" id="WP_002986624.1">
    <property type="nucleotide sequence ID" value="NC_004070.1"/>
</dbReference>
<dbReference type="SMR" id="P0DE36"/>
<dbReference type="GeneID" id="69900044"/>
<dbReference type="KEGG" id="spg:SpyM3_0058"/>
<dbReference type="HOGENOM" id="CLU_131047_2_1_9"/>
<dbReference type="Proteomes" id="UP000000564">
    <property type="component" value="Chromosome"/>
</dbReference>
<dbReference type="GO" id="GO:0022625">
    <property type="term" value="C:cytosolic large ribosomal subunit"/>
    <property type="evidence" value="ECO:0007669"/>
    <property type="project" value="TreeGrafter"/>
</dbReference>
<dbReference type="GO" id="GO:0003735">
    <property type="term" value="F:structural constituent of ribosome"/>
    <property type="evidence" value="ECO:0007669"/>
    <property type="project" value="InterPro"/>
</dbReference>
<dbReference type="GO" id="GO:0006412">
    <property type="term" value="P:translation"/>
    <property type="evidence" value="ECO:0007669"/>
    <property type="project" value="UniProtKB-UniRule"/>
</dbReference>
<dbReference type="CDD" id="cd01658">
    <property type="entry name" value="Ribosomal_L30"/>
    <property type="match status" value="1"/>
</dbReference>
<dbReference type="FunFam" id="3.30.1390.20:FF:000001">
    <property type="entry name" value="50S ribosomal protein L30"/>
    <property type="match status" value="1"/>
</dbReference>
<dbReference type="Gene3D" id="3.30.1390.20">
    <property type="entry name" value="Ribosomal protein L30, ferredoxin-like fold domain"/>
    <property type="match status" value="1"/>
</dbReference>
<dbReference type="HAMAP" id="MF_01371_B">
    <property type="entry name" value="Ribosomal_uL30_B"/>
    <property type="match status" value="1"/>
</dbReference>
<dbReference type="InterPro" id="IPR036919">
    <property type="entry name" value="Ribo_uL30_ferredoxin-like_sf"/>
</dbReference>
<dbReference type="InterPro" id="IPR005996">
    <property type="entry name" value="Ribosomal_uL30_bac-type"/>
</dbReference>
<dbReference type="InterPro" id="IPR018038">
    <property type="entry name" value="Ribosomal_uL30_CS"/>
</dbReference>
<dbReference type="InterPro" id="IPR016082">
    <property type="entry name" value="Ribosomal_uL30_ferredoxin-like"/>
</dbReference>
<dbReference type="NCBIfam" id="TIGR01308">
    <property type="entry name" value="rpmD_bact"/>
    <property type="match status" value="1"/>
</dbReference>
<dbReference type="PANTHER" id="PTHR15892:SF2">
    <property type="entry name" value="LARGE RIBOSOMAL SUBUNIT PROTEIN UL30M"/>
    <property type="match status" value="1"/>
</dbReference>
<dbReference type="PANTHER" id="PTHR15892">
    <property type="entry name" value="MITOCHONDRIAL RIBOSOMAL PROTEIN L30"/>
    <property type="match status" value="1"/>
</dbReference>
<dbReference type="Pfam" id="PF00327">
    <property type="entry name" value="Ribosomal_L30"/>
    <property type="match status" value="1"/>
</dbReference>
<dbReference type="PIRSF" id="PIRSF002211">
    <property type="entry name" value="Ribosomal_L30_bac-type"/>
    <property type="match status" value="1"/>
</dbReference>
<dbReference type="SUPFAM" id="SSF55129">
    <property type="entry name" value="Ribosomal protein L30p/L7e"/>
    <property type="match status" value="1"/>
</dbReference>
<dbReference type="PROSITE" id="PS00634">
    <property type="entry name" value="RIBOSOMAL_L30"/>
    <property type="match status" value="1"/>
</dbReference>
<keyword id="KW-0687">Ribonucleoprotein</keyword>
<keyword id="KW-0689">Ribosomal protein</keyword>
<proteinExistence type="inferred from homology"/>
<feature type="chain" id="PRO_0000273874" description="Large ribosomal subunit protein uL30">
    <location>
        <begin position="1"/>
        <end position="60"/>
    </location>
</feature>
<sequence>MAQIKITLTKSPIGRKPEQRKTVVALGLGKLNSSVVKEDNAAIRGMVTAISHLVTVEDVK</sequence>
<accession>P0DE36</accession>
<accession>Q79YR2</accession>
<accession>Q7CFK5</accession>
<gene>
    <name evidence="1" type="primary">rpmD</name>
    <name type="ordered locus">SpyM3_0058</name>
</gene>
<protein>
    <recommendedName>
        <fullName evidence="1">Large ribosomal subunit protein uL30</fullName>
    </recommendedName>
    <alternativeName>
        <fullName evidence="2">50S ribosomal protein L30</fullName>
    </alternativeName>
</protein>
<evidence type="ECO:0000255" key="1">
    <source>
        <dbReference type="HAMAP-Rule" id="MF_01371"/>
    </source>
</evidence>
<evidence type="ECO:0000305" key="2"/>
<name>RL30_STRP3</name>
<comment type="subunit">
    <text evidence="1">Part of the 50S ribosomal subunit.</text>
</comment>
<comment type="similarity">
    <text evidence="1">Belongs to the universal ribosomal protein uL30 family.</text>
</comment>
<organism>
    <name type="scientific">Streptococcus pyogenes serotype M3 (strain ATCC BAA-595 / MGAS315)</name>
    <dbReference type="NCBI Taxonomy" id="198466"/>
    <lineage>
        <taxon>Bacteria</taxon>
        <taxon>Bacillati</taxon>
        <taxon>Bacillota</taxon>
        <taxon>Bacilli</taxon>
        <taxon>Lactobacillales</taxon>
        <taxon>Streptococcaceae</taxon>
        <taxon>Streptococcus</taxon>
    </lineage>
</organism>
<reference key="1">
    <citation type="journal article" date="2002" name="Proc. Natl. Acad. Sci. U.S.A.">
        <title>Genome sequence of a serotype M3 strain of group A Streptococcus: phage-encoded toxins, the high-virulence phenotype, and clone emergence.</title>
        <authorList>
            <person name="Beres S.B."/>
            <person name="Sylva G.L."/>
            <person name="Barbian K.D."/>
            <person name="Lei B."/>
            <person name="Hoff J.S."/>
            <person name="Mammarella N.D."/>
            <person name="Liu M.-Y."/>
            <person name="Smoot J.C."/>
            <person name="Porcella S.F."/>
            <person name="Parkins L.D."/>
            <person name="Campbell D.S."/>
            <person name="Smith T.M."/>
            <person name="McCormick J.K."/>
            <person name="Leung D.Y.M."/>
            <person name="Schlievert P.M."/>
            <person name="Musser J.M."/>
        </authorList>
    </citation>
    <scope>NUCLEOTIDE SEQUENCE [LARGE SCALE GENOMIC DNA]</scope>
    <source>
        <strain>ATCC BAA-595 / MGAS315</strain>
    </source>
</reference>